<comment type="subcellular location">
    <subcellularLocation>
        <location evidence="4">Cell membrane</location>
        <topology evidence="4">Multi-pass membrane protein</topology>
    </subcellularLocation>
</comment>
<comment type="similarity">
    <text evidence="4">Belongs to the AAE transporter (TC 2.A.81) family.</text>
</comment>
<reference key="1">
    <citation type="journal article" date="2003" name="Proc. Natl. Acad. Sci. U.S.A.">
        <title>Complete genome sequence of the marine planctomycete Pirellula sp. strain 1.</title>
        <authorList>
            <person name="Gloeckner F.O."/>
            <person name="Kube M."/>
            <person name="Bauer M."/>
            <person name="Teeling H."/>
            <person name="Lombardot T."/>
            <person name="Ludwig W."/>
            <person name="Gade D."/>
            <person name="Beck A."/>
            <person name="Borzym K."/>
            <person name="Heitmann K."/>
            <person name="Rabus R."/>
            <person name="Schlesner H."/>
            <person name="Amann R."/>
            <person name="Reinhardt R."/>
        </authorList>
    </citation>
    <scope>NUCLEOTIDE SEQUENCE [LARGE SCALE GENOMIC DNA]</scope>
    <source>
        <strain>DSM 10527 / NCIMB 13988 / SH1</strain>
    </source>
</reference>
<accession>Q7UH36</accession>
<keyword id="KW-1003">Cell membrane</keyword>
<keyword id="KW-0472">Membrane</keyword>
<keyword id="KW-1185">Reference proteome</keyword>
<keyword id="KW-0677">Repeat</keyword>
<keyword id="KW-0812">Transmembrane</keyword>
<keyword id="KW-1133">Transmembrane helix</keyword>
<keyword id="KW-0813">Transport</keyword>
<dbReference type="EMBL" id="BX294141">
    <property type="protein sequence ID" value="CAD78143.1"/>
    <property type="molecule type" value="Genomic_DNA"/>
</dbReference>
<dbReference type="RefSeq" id="NP_866362.1">
    <property type="nucleotide sequence ID" value="NC_005027.1"/>
</dbReference>
<dbReference type="RefSeq" id="WP_007327627.1">
    <property type="nucleotide sequence ID" value="NC_005027.1"/>
</dbReference>
<dbReference type="SMR" id="Q7UH36"/>
<dbReference type="FunCoup" id="Q7UH36">
    <property type="interactions" value="32"/>
</dbReference>
<dbReference type="STRING" id="243090.RB4869"/>
<dbReference type="EnsemblBacteria" id="CAD78143">
    <property type="protein sequence ID" value="CAD78143"/>
    <property type="gene ID" value="RB4869"/>
</dbReference>
<dbReference type="KEGG" id="rba:RB4869"/>
<dbReference type="PATRIC" id="fig|243090.15.peg.2309"/>
<dbReference type="eggNOG" id="COG0490">
    <property type="taxonomic scope" value="Bacteria"/>
</dbReference>
<dbReference type="eggNOG" id="COG2985">
    <property type="taxonomic scope" value="Bacteria"/>
</dbReference>
<dbReference type="HOGENOM" id="CLU_035023_3_0_0"/>
<dbReference type="InParanoid" id="Q7UH36"/>
<dbReference type="OrthoDB" id="9155749at2"/>
<dbReference type="Proteomes" id="UP000001025">
    <property type="component" value="Chromosome"/>
</dbReference>
<dbReference type="GO" id="GO:0005886">
    <property type="term" value="C:plasma membrane"/>
    <property type="evidence" value="ECO:0000318"/>
    <property type="project" value="GO_Central"/>
</dbReference>
<dbReference type="GO" id="GO:0008324">
    <property type="term" value="F:monoatomic cation transmembrane transporter activity"/>
    <property type="evidence" value="ECO:0007669"/>
    <property type="project" value="InterPro"/>
</dbReference>
<dbReference type="GO" id="GO:0006813">
    <property type="term" value="P:potassium ion transport"/>
    <property type="evidence" value="ECO:0007669"/>
    <property type="project" value="InterPro"/>
</dbReference>
<dbReference type="Gene3D" id="3.30.70.1450">
    <property type="entry name" value="Regulator of K+ conductance, C-terminal domain"/>
    <property type="match status" value="1"/>
</dbReference>
<dbReference type="InterPro" id="IPR050144">
    <property type="entry name" value="AAE_transporter"/>
</dbReference>
<dbReference type="InterPro" id="IPR006037">
    <property type="entry name" value="RCK_C"/>
</dbReference>
<dbReference type="InterPro" id="IPR036721">
    <property type="entry name" value="RCK_C_sf"/>
</dbReference>
<dbReference type="InterPro" id="IPR006512">
    <property type="entry name" value="YidE_YbjL"/>
</dbReference>
<dbReference type="NCBIfam" id="TIGR01625">
    <property type="entry name" value="YidE_YbjL_dupl"/>
    <property type="match status" value="2"/>
</dbReference>
<dbReference type="PANTHER" id="PTHR30445">
    <property type="entry name" value="K(+)_H(+) ANTIPORTER SUBUNIT KHTT"/>
    <property type="match status" value="1"/>
</dbReference>
<dbReference type="PANTHER" id="PTHR30445:SF3">
    <property type="entry name" value="TRANSPORT PROTEIN YIDE-RELATED"/>
    <property type="match status" value="1"/>
</dbReference>
<dbReference type="Pfam" id="PF06826">
    <property type="entry name" value="Asp-Al_Ex"/>
    <property type="match status" value="2"/>
</dbReference>
<dbReference type="Pfam" id="PF02080">
    <property type="entry name" value="TrkA_C"/>
    <property type="match status" value="1"/>
</dbReference>
<dbReference type="SUPFAM" id="SSF116726">
    <property type="entry name" value="TrkA C-terminal domain-like"/>
    <property type="match status" value="1"/>
</dbReference>
<dbReference type="PROSITE" id="PS51202">
    <property type="entry name" value="RCK_C"/>
    <property type="match status" value="2"/>
</dbReference>
<feature type="chain" id="PRO_0000208778" description="Uncharacterized transporter RB4869">
    <location>
        <begin position="1"/>
        <end position="534"/>
    </location>
</feature>
<feature type="transmembrane region" description="Helical" evidence="1">
    <location>
        <begin position="4"/>
        <end position="22"/>
    </location>
</feature>
<feature type="transmembrane region" description="Helical" evidence="1">
    <location>
        <begin position="24"/>
        <end position="46"/>
    </location>
</feature>
<feature type="transmembrane region" description="Helical" evidence="1">
    <location>
        <begin position="56"/>
        <end position="75"/>
    </location>
</feature>
<feature type="transmembrane region" description="Helical" evidence="1">
    <location>
        <begin position="82"/>
        <end position="104"/>
    </location>
</feature>
<feature type="transmembrane region" description="Helical" evidence="1">
    <location>
        <begin position="134"/>
        <end position="156"/>
    </location>
</feature>
<feature type="transmembrane region" description="Helical" evidence="1">
    <location>
        <begin position="359"/>
        <end position="378"/>
    </location>
</feature>
<feature type="transmembrane region" description="Helical" evidence="1">
    <location>
        <begin position="382"/>
        <end position="401"/>
    </location>
</feature>
<feature type="transmembrane region" description="Helical" evidence="1">
    <location>
        <begin position="408"/>
        <end position="430"/>
    </location>
</feature>
<feature type="transmembrane region" description="Helical" evidence="1">
    <location>
        <begin position="445"/>
        <end position="467"/>
    </location>
</feature>
<feature type="transmembrane region" description="Helical" evidence="1">
    <location>
        <begin position="479"/>
        <end position="501"/>
    </location>
</feature>
<feature type="transmembrane region" description="Helical" evidence="1">
    <location>
        <begin position="511"/>
        <end position="533"/>
    </location>
</feature>
<feature type="domain" description="RCK C-terminal 1" evidence="2">
    <location>
        <begin position="180"/>
        <end position="264"/>
    </location>
</feature>
<feature type="domain" description="RCK C-terminal 2" evidence="2">
    <location>
        <begin position="265"/>
        <end position="349"/>
    </location>
</feature>
<feature type="region of interest" description="Disordered" evidence="3">
    <location>
        <begin position="167"/>
        <end position="187"/>
    </location>
</feature>
<feature type="compositionally biased region" description="Polar residues" evidence="3">
    <location>
        <begin position="172"/>
        <end position="187"/>
    </location>
</feature>
<name>Y4869_RHOBA</name>
<organism>
    <name type="scientific">Rhodopirellula baltica (strain DSM 10527 / NCIMB 13988 / SH1)</name>
    <dbReference type="NCBI Taxonomy" id="243090"/>
    <lineage>
        <taxon>Bacteria</taxon>
        <taxon>Pseudomonadati</taxon>
        <taxon>Planctomycetota</taxon>
        <taxon>Planctomycetia</taxon>
        <taxon>Pirellulales</taxon>
        <taxon>Pirellulaceae</taxon>
        <taxon>Rhodopirellula</taxon>
    </lineage>
</organism>
<sequence length="534" mass="55415">MNPILVLLCVIALGLLVGRVSFRGISLGTSAILFVALLAGHYGWTIPTGFGTLGLALFVYCVGISAGPTFFRGLASHGRAMAITGSVIVLTGVAVTWTSARLLGLPAELAGGLMAGAMTSTPALGAITQSSSDPAAVAVGFGVAYPIGIIAVVLFVQIAIKLFAKPGDSDGTDSASETSGQSSAEIAESNSIGRRVVRIANPVVSGKRPSDIVAFADSPCQMSRVQREGRWRPTPPDYQFEIGDDVMLVGGASEIRRVSETLGELQDTAEPVVDADRERRYVVVTSPEIYGRTLKELRLRSKYGVTIVRVQRHDVEFVPSARTRIEFGDGLVAVGEPDALAKIANAVGHRPRTVNETDLLSLVAGIVLGIFVGNLSLQIGEFSMSLGIAGGPLMVGLILGHFRRLGPIRGSYPPAAMLLMTEGGLALFLADAGLNAGANVVEVLMERGAMLCVAAAAIAIIPLLVGFAGSRYFGGRTLWQSLGATCGGMTSTPGLAVLTGATDSSQPATSYVAAYPVALVLITVAAPWLVELIG</sequence>
<proteinExistence type="inferred from homology"/>
<evidence type="ECO:0000255" key="1"/>
<evidence type="ECO:0000255" key="2">
    <source>
        <dbReference type="PROSITE-ProRule" id="PRU00544"/>
    </source>
</evidence>
<evidence type="ECO:0000256" key="3">
    <source>
        <dbReference type="SAM" id="MobiDB-lite"/>
    </source>
</evidence>
<evidence type="ECO:0000305" key="4"/>
<protein>
    <recommendedName>
        <fullName>Uncharacterized transporter RB4869</fullName>
    </recommendedName>
</protein>
<gene>
    <name type="ordered locus">RB4869</name>
</gene>